<sequence length="63" mass="7240">MVHEYDKTLKVCLVRSLIGVPSRHRLSVRALGLSKVSDMRKVNDTPQVRGLINKVHYLVRIQD</sequence>
<comment type="subunit">
    <text evidence="1">Part of the 50S ribosomal subunit.</text>
</comment>
<comment type="similarity">
    <text evidence="1">Belongs to the universal ribosomal protein uL30 family.</text>
</comment>
<dbReference type="EMBL" id="CP001011">
    <property type="protein sequence ID" value="ACB91898.1"/>
    <property type="molecule type" value="Genomic_DNA"/>
</dbReference>
<dbReference type="RefSeq" id="WP_012382464.1">
    <property type="nucleotide sequence ID" value="NC_010577.1"/>
</dbReference>
<dbReference type="SMR" id="B2I8I7"/>
<dbReference type="GeneID" id="93904157"/>
<dbReference type="KEGG" id="xfn:XfasM23_0451"/>
<dbReference type="HOGENOM" id="CLU_131047_1_4_6"/>
<dbReference type="Proteomes" id="UP000001698">
    <property type="component" value="Chromosome"/>
</dbReference>
<dbReference type="GO" id="GO:0022625">
    <property type="term" value="C:cytosolic large ribosomal subunit"/>
    <property type="evidence" value="ECO:0007669"/>
    <property type="project" value="TreeGrafter"/>
</dbReference>
<dbReference type="GO" id="GO:0003735">
    <property type="term" value="F:structural constituent of ribosome"/>
    <property type="evidence" value="ECO:0007669"/>
    <property type="project" value="InterPro"/>
</dbReference>
<dbReference type="GO" id="GO:0006412">
    <property type="term" value="P:translation"/>
    <property type="evidence" value="ECO:0007669"/>
    <property type="project" value="UniProtKB-UniRule"/>
</dbReference>
<dbReference type="CDD" id="cd01658">
    <property type="entry name" value="Ribosomal_L30"/>
    <property type="match status" value="1"/>
</dbReference>
<dbReference type="Gene3D" id="3.30.1390.20">
    <property type="entry name" value="Ribosomal protein L30, ferredoxin-like fold domain"/>
    <property type="match status" value="1"/>
</dbReference>
<dbReference type="HAMAP" id="MF_01371_B">
    <property type="entry name" value="Ribosomal_uL30_B"/>
    <property type="match status" value="1"/>
</dbReference>
<dbReference type="InterPro" id="IPR036919">
    <property type="entry name" value="Ribo_uL30_ferredoxin-like_sf"/>
</dbReference>
<dbReference type="InterPro" id="IPR005996">
    <property type="entry name" value="Ribosomal_uL30_bac-type"/>
</dbReference>
<dbReference type="InterPro" id="IPR016082">
    <property type="entry name" value="Ribosomal_uL30_ferredoxin-like"/>
</dbReference>
<dbReference type="NCBIfam" id="TIGR01308">
    <property type="entry name" value="rpmD_bact"/>
    <property type="match status" value="1"/>
</dbReference>
<dbReference type="PANTHER" id="PTHR15892:SF2">
    <property type="entry name" value="LARGE RIBOSOMAL SUBUNIT PROTEIN UL30M"/>
    <property type="match status" value="1"/>
</dbReference>
<dbReference type="PANTHER" id="PTHR15892">
    <property type="entry name" value="MITOCHONDRIAL RIBOSOMAL PROTEIN L30"/>
    <property type="match status" value="1"/>
</dbReference>
<dbReference type="Pfam" id="PF00327">
    <property type="entry name" value="Ribosomal_L30"/>
    <property type="match status" value="1"/>
</dbReference>
<dbReference type="PIRSF" id="PIRSF002211">
    <property type="entry name" value="Ribosomal_L30_bac-type"/>
    <property type="match status" value="1"/>
</dbReference>
<dbReference type="SUPFAM" id="SSF55129">
    <property type="entry name" value="Ribosomal protein L30p/L7e"/>
    <property type="match status" value="1"/>
</dbReference>
<feature type="chain" id="PRO_0000347157" description="Large ribosomal subunit protein uL30">
    <location>
        <begin position="1"/>
        <end position="63"/>
    </location>
</feature>
<name>RL30_XYLF2</name>
<evidence type="ECO:0000255" key="1">
    <source>
        <dbReference type="HAMAP-Rule" id="MF_01371"/>
    </source>
</evidence>
<evidence type="ECO:0000305" key="2"/>
<protein>
    <recommendedName>
        <fullName evidence="1">Large ribosomal subunit protein uL30</fullName>
    </recommendedName>
    <alternativeName>
        <fullName evidence="2">50S ribosomal protein L30</fullName>
    </alternativeName>
</protein>
<organism>
    <name type="scientific">Xylella fastidiosa (strain M23)</name>
    <dbReference type="NCBI Taxonomy" id="405441"/>
    <lineage>
        <taxon>Bacteria</taxon>
        <taxon>Pseudomonadati</taxon>
        <taxon>Pseudomonadota</taxon>
        <taxon>Gammaproteobacteria</taxon>
        <taxon>Lysobacterales</taxon>
        <taxon>Lysobacteraceae</taxon>
        <taxon>Xylella</taxon>
    </lineage>
</organism>
<gene>
    <name evidence="1" type="primary">rpmD</name>
    <name type="ordered locus">XfasM23_0451</name>
</gene>
<proteinExistence type="inferred from homology"/>
<reference key="1">
    <citation type="journal article" date="2010" name="J. Bacteriol.">
        <title>Whole genome sequences of two Xylella fastidiosa strains (M12 and M23) causing almond leaf scorch disease in California.</title>
        <authorList>
            <person name="Chen J."/>
            <person name="Xie G."/>
            <person name="Han S."/>
            <person name="Chertkov O."/>
            <person name="Sims D."/>
            <person name="Civerolo E.L."/>
        </authorList>
    </citation>
    <scope>NUCLEOTIDE SEQUENCE [LARGE SCALE GENOMIC DNA]</scope>
    <source>
        <strain>M23</strain>
    </source>
</reference>
<keyword id="KW-0687">Ribonucleoprotein</keyword>
<keyword id="KW-0689">Ribosomal protein</keyword>
<accession>B2I8I7</accession>